<gene>
    <name type="primary">Xdh</name>
</gene>
<keyword id="KW-0001">2Fe-2S</keyword>
<keyword id="KW-0963">Cytoplasm</keyword>
<keyword id="KW-0903">Direct protein sequencing</keyword>
<keyword id="KW-1015">Disulfide bond</keyword>
<keyword id="KW-0274">FAD</keyword>
<keyword id="KW-0285">Flavoprotein</keyword>
<keyword id="KW-0408">Iron</keyword>
<keyword id="KW-0411">Iron-sulfur</keyword>
<keyword id="KW-0479">Metal-binding</keyword>
<keyword id="KW-0500">Molybdenum</keyword>
<keyword id="KW-0520">NAD</keyword>
<keyword id="KW-0560">Oxidoreductase</keyword>
<keyword id="KW-0576">Peroxisome</keyword>
<keyword id="KW-1185">Reference proteome</keyword>
<keyword id="KW-0964">Secreted</keyword>
<comment type="function">
    <text evidence="2">Key enzyme in purine degradation. Catalyzes the oxidation of hypoxanthine to xanthine. Catalyzes the oxidation of xanthine to uric acid. Contributes to the generation of reactive oxygen species.</text>
</comment>
<comment type="catalytic activity">
    <reaction evidence="2">
        <text>xanthine + NAD(+) + H2O = urate + NADH + H(+)</text>
        <dbReference type="Rhea" id="RHEA:16669"/>
        <dbReference type="ChEBI" id="CHEBI:15377"/>
        <dbReference type="ChEBI" id="CHEBI:15378"/>
        <dbReference type="ChEBI" id="CHEBI:17712"/>
        <dbReference type="ChEBI" id="CHEBI:17775"/>
        <dbReference type="ChEBI" id="CHEBI:57540"/>
        <dbReference type="ChEBI" id="CHEBI:57945"/>
        <dbReference type="EC" id="1.17.1.4"/>
    </reaction>
</comment>
<comment type="catalytic activity">
    <reaction evidence="2">
        <text>hypoxanthine + NAD(+) + H2O = xanthine + NADH + H(+)</text>
        <dbReference type="Rhea" id="RHEA:24670"/>
        <dbReference type="ChEBI" id="CHEBI:15377"/>
        <dbReference type="ChEBI" id="CHEBI:15378"/>
        <dbReference type="ChEBI" id="CHEBI:17368"/>
        <dbReference type="ChEBI" id="CHEBI:17712"/>
        <dbReference type="ChEBI" id="CHEBI:57540"/>
        <dbReference type="ChEBI" id="CHEBI:57945"/>
        <dbReference type="EC" id="1.17.1.4"/>
    </reaction>
</comment>
<comment type="catalytic activity">
    <reaction evidence="2">
        <text>xanthine + O2 + H2O = urate + H2O2</text>
        <dbReference type="Rhea" id="RHEA:21132"/>
        <dbReference type="ChEBI" id="CHEBI:15377"/>
        <dbReference type="ChEBI" id="CHEBI:15379"/>
        <dbReference type="ChEBI" id="CHEBI:16240"/>
        <dbReference type="ChEBI" id="CHEBI:17712"/>
        <dbReference type="ChEBI" id="CHEBI:17775"/>
        <dbReference type="EC" id="1.17.3.2"/>
    </reaction>
</comment>
<comment type="cofactor">
    <cofactor evidence="1">
        <name>FAD</name>
        <dbReference type="ChEBI" id="CHEBI:57692"/>
    </cofactor>
</comment>
<comment type="cofactor">
    <cofactor evidence="1">
        <name>Mo-molybdopterin</name>
        <dbReference type="ChEBI" id="CHEBI:71302"/>
    </cofactor>
    <text evidence="1">Binds 1 Mo-molybdopterin (Mo-MPT) cofactor per subunit.</text>
</comment>
<comment type="cofactor">
    <cofactor evidence="2">
        <name>[2Fe-2S] cluster</name>
        <dbReference type="ChEBI" id="CHEBI:190135"/>
    </cofactor>
    <text evidence="2">Binds 2 [2Fe-2S] clusters per subunit.</text>
</comment>
<comment type="activity regulation">
    <text evidence="1">Can be converted from the dehydrogenase form (D) to the oxidase form (O) irreversibly by proteolysis or reversibly through the oxidation of sulfhydryl groups.</text>
</comment>
<comment type="subunit">
    <text evidence="5">Homodimer. Interacts with BTN1A1.</text>
</comment>
<comment type="subcellular location">
    <subcellularLocation>
        <location evidence="1">Cytoplasm</location>
    </subcellularLocation>
    <subcellularLocation>
        <location evidence="1">Peroxisome</location>
    </subcellularLocation>
    <subcellularLocation>
        <location evidence="1">Secreted</location>
    </subcellularLocation>
</comment>
<comment type="induction">
    <text>By interferon.</text>
</comment>
<comment type="PTM">
    <text evidence="1">Subject to partial proteolysis; this alters the enzyme from the dehydrogenase form (D) to the oxidase form (O).</text>
</comment>
<comment type="PTM">
    <text evidence="1">Contains sulfhydryl groups that are easily oxidized (in vitro); this alters the enzyme from the dehydrogenase form (D) to the oxidase form (O).</text>
</comment>
<comment type="similarity">
    <text evidence="6">Belongs to the xanthine dehydrogenase family.</text>
</comment>
<accession>Q00519</accession>
<accession>E9QLM9</accession>
<dbReference type="EC" id="1.17.1.4" evidence="2"/>
<dbReference type="EC" id="1.17.3.2" evidence="2"/>
<dbReference type="EMBL" id="X75129">
    <property type="protein sequence ID" value="CAA52997.1"/>
    <property type="molecule type" value="Genomic_DNA"/>
</dbReference>
<dbReference type="EMBL" id="X75128">
    <property type="protein sequence ID" value="CAA52997.1"/>
    <property type="status" value="JOINED"/>
    <property type="molecule type" value="Genomic_DNA"/>
</dbReference>
<dbReference type="EMBL" id="X75127">
    <property type="protein sequence ID" value="CAA52997.1"/>
    <property type="status" value="JOINED"/>
    <property type="molecule type" value="Genomic_DNA"/>
</dbReference>
<dbReference type="EMBL" id="X75126">
    <property type="protein sequence ID" value="CAA52997.1"/>
    <property type="status" value="JOINED"/>
    <property type="molecule type" value="Genomic_DNA"/>
</dbReference>
<dbReference type="EMBL" id="X75125">
    <property type="protein sequence ID" value="CAA52997.1"/>
    <property type="status" value="JOINED"/>
    <property type="molecule type" value="Genomic_DNA"/>
</dbReference>
<dbReference type="EMBL" id="X75124">
    <property type="protein sequence ID" value="CAA52997.1"/>
    <property type="status" value="JOINED"/>
    <property type="molecule type" value="Genomic_DNA"/>
</dbReference>
<dbReference type="EMBL" id="X75123">
    <property type="protein sequence ID" value="CAA52997.1"/>
    <property type="status" value="JOINED"/>
    <property type="molecule type" value="Genomic_DNA"/>
</dbReference>
<dbReference type="EMBL" id="X75122">
    <property type="protein sequence ID" value="CAA52997.1"/>
    <property type="status" value="JOINED"/>
    <property type="molecule type" value="Genomic_DNA"/>
</dbReference>
<dbReference type="EMBL" id="X75121">
    <property type="protein sequence ID" value="CAA52997.1"/>
    <property type="status" value="JOINED"/>
    <property type="molecule type" value="Genomic_DNA"/>
</dbReference>
<dbReference type="EMBL" id="X75120">
    <property type="protein sequence ID" value="CAA52997.1"/>
    <property type="status" value="JOINED"/>
    <property type="molecule type" value="Genomic_DNA"/>
</dbReference>
<dbReference type="EMBL" id="X75119">
    <property type="protein sequence ID" value="CAA52997.1"/>
    <property type="status" value="JOINED"/>
    <property type="molecule type" value="Genomic_DNA"/>
</dbReference>
<dbReference type="EMBL" id="X75130">
    <property type="protein sequence ID" value="CAA52997.1"/>
    <property type="status" value="JOINED"/>
    <property type="molecule type" value="Genomic_DNA"/>
</dbReference>
<dbReference type="EMBL" id="X75131">
    <property type="protein sequence ID" value="CAA52997.1"/>
    <property type="status" value="JOINED"/>
    <property type="molecule type" value="Genomic_DNA"/>
</dbReference>
<dbReference type="EMBL" id="X75132">
    <property type="protein sequence ID" value="CAA52997.1"/>
    <property type="status" value="JOINED"/>
    <property type="molecule type" value="Genomic_DNA"/>
</dbReference>
<dbReference type="EMBL" id="X75133">
    <property type="protein sequence ID" value="CAA52997.1"/>
    <property type="status" value="JOINED"/>
    <property type="molecule type" value="Genomic_DNA"/>
</dbReference>
<dbReference type="EMBL" id="X75134">
    <property type="protein sequence ID" value="CAA52997.1"/>
    <property type="status" value="JOINED"/>
    <property type="molecule type" value="Genomic_DNA"/>
</dbReference>
<dbReference type="EMBL" id="X75135">
    <property type="protein sequence ID" value="CAA52997.1"/>
    <property type="status" value="JOINED"/>
    <property type="molecule type" value="Genomic_DNA"/>
</dbReference>
<dbReference type="EMBL" id="X75136">
    <property type="protein sequence ID" value="CAA52997.1"/>
    <property type="status" value="JOINED"/>
    <property type="molecule type" value="Genomic_DNA"/>
</dbReference>
<dbReference type="EMBL" id="X75137">
    <property type="protein sequence ID" value="CAA52997.1"/>
    <property type="status" value="JOINED"/>
    <property type="molecule type" value="Genomic_DNA"/>
</dbReference>
<dbReference type="EMBL" id="X75138">
    <property type="protein sequence ID" value="CAA52997.1"/>
    <property type="status" value="JOINED"/>
    <property type="molecule type" value="Genomic_DNA"/>
</dbReference>
<dbReference type="EMBL" id="X75139">
    <property type="protein sequence ID" value="CAA52997.1"/>
    <property type="status" value="JOINED"/>
    <property type="molecule type" value="Genomic_DNA"/>
</dbReference>
<dbReference type="EMBL" id="X75140">
    <property type="protein sequence ID" value="CAA52997.1"/>
    <property type="status" value="JOINED"/>
    <property type="molecule type" value="Genomic_DNA"/>
</dbReference>
<dbReference type="EMBL" id="X75141">
    <property type="protein sequence ID" value="CAA52997.1"/>
    <property type="status" value="JOINED"/>
    <property type="molecule type" value="Genomic_DNA"/>
</dbReference>
<dbReference type="EMBL" id="X75142">
    <property type="protein sequence ID" value="CAA52997.1"/>
    <property type="status" value="JOINED"/>
    <property type="molecule type" value="Genomic_DNA"/>
</dbReference>
<dbReference type="EMBL" id="X75143">
    <property type="protein sequence ID" value="CAA52997.1"/>
    <property type="status" value="JOINED"/>
    <property type="molecule type" value="Genomic_DNA"/>
</dbReference>
<dbReference type="EMBL" id="X75151">
    <property type="protein sequence ID" value="CAA52997.1"/>
    <property type="status" value="JOINED"/>
    <property type="molecule type" value="Genomic_DNA"/>
</dbReference>
<dbReference type="EMBL" id="X75152">
    <property type="protein sequence ID" value="CAA52997.1"/>
    <property type="status" value="JOINED"/>
    <property type="molecule type" value="Genomic_DNA"/>
</dbReference>
<dbReference type="EMBL" id="X75153">
    <property type="protein sequence ID" value="CAA52997.1"/>
    <property type="status" value="JOINED"/>
    <property type="molecule type" value="Genomic_DNA"/>
</dbReference>
<dbReference type="EMBL" id="X75154">
    <property type="protein sequence ID" value="CAA52997.1"/>
    <property type="status" value="JOINED"/>
    <property type="molecule type" value="Genomic_DNA"/>
</dbReference>
<dbReference type="EMBL" id="X75144">
    <property type="protein sequence ID" value="CAA52997.1"/>
    <property type="status" value="JOINED"/>
    <property type="molecule type" value="Genomic_DNA"/>
</dbReference>
<dbReference type="EMBL" id="X75145">
    <property type="protein sequence ID" value="CAA52997.1"/>
    <property type="status" value="JOINED"/>
    <property type="molecule type" value="Genomic_DNA"/>
</dbReference>
<dbReference type="EMBL" id="X75146">
    <property type="protein sequence ID" value="CAA52997.1"/>
    <property type="status" value="JOINED"/>
    <property type="molecule type" value="Genomic_DNA"/>
</dbReference>
<dbReference type="EMBL" id="X75147">
    <property type="protein sequence ID" value="CAA52997.1"/>
    <property type="status" value="JOINED"/>
    <property type="molecule type" value="Genomic_DNA"/>
</dbReference>
<dbReference type="EMBL" id="X75148">
    <property type="protein sequence ID" value="CAA52997.1"/>
    <property type="status" value="JOINED"/>
    <property type="molecule type" value="Genomic_DNA"/>
</dbReference>
<dbReference type="EMBL" id="X75149">
    <property type="protein sequence ID" value="CAA52997.1"/>
    <property type="status" value="JOINED"/>
    <property type="molecule type" value="Genomic_DNA"/>
</dbReference>
<dbReference type="EMBL" id="X75150">
    <property type="protein sequence ID" value="CAA52997.1"/>
    <property type="status" value="JOINED"/>
    <property type="molecule type" value="Genomic_DNA"/>
</dbReference>
<dbReference type="EMBL" id="X62932">
    <property type="protein sequence ID" value="CAA44705.1"/>
    <property type="molecule type" value="mRNA"/>
</dbReference>
<dbReference type="EMBL" id="AC159187">
    <property type="status" value="NOT_ANNOTATED_CDS"/>
    <property type="molecule type" value="Genomic_DNA"/>
</dbReference>
<dbReference type="EMBL" id="CT025731">
    <property type="status" value="NOT_ANNOTATED_CDS"/>
    <property type="molecule type" value="Genomic_DNA"/>
</dbReference>
<dbReference type="CCDS" id="CCDS28967.1"/>
<dbReference type="PIR" id="I48374">
    <property type="entry name" value="XOMSDH"/>
</dbReference>
<dbReference type="RefSeq" id="NP_035853.2">
    <property type="nucleotide sequence ID" value="NM_011723.3"/>
</dbReference>
<dbReference type="SMR" id="Q00519"/>
<dbReference type="BioGRID" id="204590">
    <property type="interactions" value="6"/>
</dbReference>
<dbReference type="CORUM" id="Q00519"/>
<dbReference type="FunCoup" id="Q00519">
    <property type="interactions" value="424"/>
</dbReference>
<dbReference type="STRING" id="10090.ENSMUSP00000024866"/>
<dbReference type="BindingDB" id="Q00519"/>
<dbReference type="ChEMBL" id="CHEMBL5465298"/>
<dbReference type="GlyGen" id="Q00519">
    <property type="glycosylation" value="1 site, 1 O-linked glycan (1 site)"/>
</dbReference>
<dbReference type="iPTMnet" id="Q00519"/>
<dbReference type="PhosphoSitePlus" id="Q00519"/>
<dbReference type="SwissPalm" id="Q00519"/>
<dbReference type="CPTAC" id="non-CPTAC-4057"/>
<dbReference type="jPOST" id="Q00519"/>
<dbReference type="PaxDb" id="10090-ENSMUSP00000024866"/>
<dbReference type="PeptideAtlas" id="Q00519"/>
<dbReference type="ProteomicsDB" id="299780"/>
<dbReference type="Pumba" id="Q00519"/>
<dbReference type="Antibodypedia" id="4018">
    <property type="antibodies" value="277 antibodies from 35 providers"/>
</dbReference>
<dbReference type="DNASU" id="22436"/>
<dbReference type="Ensembl" id="ENSMUST00000024866.6">
    <property type="protein sequence ID" value="ENSMUSP00000024866.5"/>
    <property type="gene ID" value="ENSMUSG00000024066.10"/>
</dbReference>
<dbReference type="GeneID" id="22436"/>
<dbReference type="KEGG" id="mmu:22436"/>
<dbReference type="UCSC" id="uc008dno.2">
    <property type="organism name" value="mouse"/>
</dbReference>
<dbReference type="AGR" id="MGI:98973"/>
<dbReference type="CTD" id="7498"/>
<dbReference type="MGI" id="MGI:98973">
    <property type="gene designation" value="Xdh"/>
</dbReference>
<dbReference type="VEuPathDB" id="HostDB:ENSMUSG00000024066"/>
<dbReference type="eggNOG" id="KOG0430">
    <property type="taxonomic scope" value="Eukaryota"/>
</dbReference>
<dbReference type="GeneTree" id="ENSGT00950000183114"/>
<dbReference type="HOGENOM" id="CLU_001681_1_2_1"/>
<dbReference type="InParanoid" id="Q00519"/>
<dbReference type="OMA" id="PHPTQER"/>
<dbReference type="OrthoDB" id="8300278at2759"/>
<dbReference type="PhylomeDB" id="Q00519"/>
<dbReference type="TreeFam" id="TF353036"/>
<dbReference type="BioCyc" id="MetaCyc:MONOMER-14019"/>
<dbReference type="Reactome" id="R-MMU-74259">
    <property type="pathway name" value="Purine catabolism"/>
</dbReference>
<dbReference type="Reactome" id="R-MMU-8851680">
    <property type="pathway name" value="Butyrophilin (BTN) family interactions"/>
</dbReference>
<dbReference type="Reactome" id="R-MMU-9748787">
    <property type="pathway name" value="Azathioprine ADME"/>
</dbReference>
<dbReference type="SABIO-RK" id="Q00519"/>
<dbReference type="BioGRID-ORCS" id="22436">
    <property type="hits" value="3 hits in 79 CRISPR screens"/>
</dbReference>
<dbReference type="ChiTaRS" id="Xdh">
    <property type="organism name" value="mouse"/>
</dbReference>
<dbReference type="PRO" id="PR:Q00519"/>
<dbReference type="Proteomes" id="UP000000589">
    <property type="component" value="Chromosome 17"/>
</dbReference>
<dbReference type="RNAct" id="Q00519">
    <property type="molecule type" value="protein"/>
</dbReference>
<dbReference type="Bgee" id="ENSMUSG00000024066">
    <property type="expression patterns" value="Expressed in granulocyte and 160 other cell types or tissues"/>
</dbReference>
<dbReference type="ExpressionAtlas" id="Q00519">
    <property type="expression patterns" value="baseline and differential"/>
</dbReference>
<dbReference type="GO" id="GO:0005829">
    <property type="term" value="C:cytosol"/>
    <property type="evidence" value="ECO:0000314"/>
    <property type="project" value="MGI"/>
</dbReference>
<dbReference type="GO" id="GO:0005576">
    <property type="term" value="C:extracellular region"/>
    <property type="evidence" value="ECO:0007669"/>
    <property type="project" value="UniProtKB-SubCell"/>
</dbReference>
<dbReference type="GO" id="GO:0005777">
    <property type="term" value="C:peroxisome"/>
    <property type="evidence" value="ECO:0000266"/>
    <property type="project" value="MGI"/>
</dbReference>
<dbReference type="GO" id="GO:0016529">
    <property type="term" value="C:sarcoplasmic reticulum"/>
    <property type="evidence" value="ECO:0000314"/>
    <property type="project" value="BHF-UCL"/>
</dbReference>
<dbReference type="GO" id="GO:0051537">
    <property type="term" value="F:2 iron, 2 sulfur cluster binding"/>
    <property type="evidence" value="ECO:0000250"/>
    <property type="project" value="UniProtKB"/>
</dbReference>
<dbReference type="GO" id="GO:0071949">
    <property type="term" value="F:FAD binding"/>
    <property type="evidence" value="ECO:0007669"/>
    <property type="project" value="InterPro"/>
</dbReference>
<dbReference type="GO" id="GO:0050660">
    <property type="term" value="F:flavin adenine dinucleotide binding"/>
    <property type="evidence" value="ECO:0000250"/>
    <property type="project" value="UniProtKB"/>
</dbReference>
<dbReference type="GO" id="GO:0070674">
    <property type="term" value="F:hypoxanthine dehydrogenase activity"/>
    <property type="evidence" value="ECO:0000314"/>
    <property type="project" value="MGI"/>
</dbReference>
<dbReference type="GO" id="GO:0070675">
    <property type="term" value="F:hypoxanthine oxidase activity"/>
    <property type="evidence" value="ECO:0000314"/>
    <property type="project" value="MGI"/>
</dbReference>
<dbReference type="GO" id="GO:0005506">
    <property type="term" value="F:iron ion binding"/>
    <property type="evidence" value="ECO:0007669"/>
    <property type="project" value="InterPro"/>
</dbReference>
<dbReference type="GO" id="GO:0030151">
    <property type="term" value="F:molybdenum ion binding"/>
    <property type="evidence" value="ECO:0007669"/>
    <property type="project" value="InterPro"/>
</dbReference>
<dbReference type="GO" id="GO:0043546">
    <property type="term" value="F:molybdopterin cofactor binding"/>
    <property type="evidence" value="ECO:0000250"/>
    <property type="project" value="UniProtKB"/>
</dbReference>
<dbReference type="GO" id="GO:0016491">
    <property type="term" value="F:oxidoreductase activity"/>
    <property type="evidence" value="ECO:0000314"/>
    <property type="project" value="MGI"/>
</dbReference>
<dbReference type="GO" id="GO:0042803">
    <property type="term" value="F:protein homodimerization activity"/>
    <property type="evidence" value="ECO:0007669"/>
    <property type="project" value="Ensembl"/>
</dbReference>
<dbReference type="GO" id="GO:0004854">
    <property type="term" value="F:xanthine dehydrogenase activity"/>
    <property type="evidence" value="ECO:0000314"/>
    <property type="project" value="MGI"/>
</dbReference>
<dbReference type="GO" id="GO:0004855">
    <property type="term" value="F:xanthine oxidase activity"/>
    <property type="evidence" value="ECO:0000314"/>
    <property type="project" value="MGI"/>
</dbReference>
<dbReference type="GO" id="GO:0006154">
    <property type="term" value="P:adenosine catabolic process"/>
    <property type="evidence" value="ECO:0000314"/>
    <property type="project" value="MGI"/>
</dbReference>
<dbReference type="GO" id="GO:0000255">
    <property type="term" value="P:allantoin metabolic process"/>
    <property type="evidence" value="ECO:0000314"/>
    <property type="project" value="MGI"/>
</dbReference>
<dbReference type="GO" id="GO:0043605">
    <property type="term" value="P:amide catabolic process"/>
    <property type="evidence" value="ECO:0000314"/>
    <property type="project" value="MGI"/>
</dbReference>
<dbReference type="GO" id="GO:0006196">
    <property type="term" value="P:AMP catabolic process"/>
    <property type="evidence" value="ECO:0000314"/>
    <property type="project" value="MGI"/>
</dbReference>
<dbReference type="GO" id="GO:0046059">
    <property type="term" value="P:dAMP catabolic process"/>
    <property type="evidence" value="ECO:0000314"/>
    <property type="project" value="MGI"/>
</dbReference>
<dbReference type="GO" id="GO:0006157">
    <property type="term" value="P:deoxyadenosine catabolic process"/>
    <property type="evidence" value="ECO:0000314"/>
    <property type="project" value="MGI"/>
</dbReference>
<dbReference type="GO" id="GO:0006161">
    <property type="term" value="P:deoxyguanosine catabolic process"/>
    <property type="evidence" value="ECO:0000314"/>
    <property type="project" value="MGI"/>
</dbReference>
<dbReference type="GO" id="GO:0006149">
    <property type="term" value="P:deoxyinosine catabolic process"/>
    <property type="evidence" value="ECO:0000314"/>
    <property type="project" value="MGI"/>
</dbReference>
<dbReference type="GO" id="GO:0046055">
    <property type="term" value="P:dGMP catabolic process"/>
    <property type="evidence" value="ECO:0000314"/>
    <property type="project" value="MGI"/>
</dbReference>
<dbReference type="GO" id="GO:0046038">
    <property type="term" value="P:GMP catabolic process"/>
    <property type="evidence" value="ECO:0000314"/>
    <property type="project" value="MGI"/>
</dbReference>
<dbReference type="GO" id="GO:0006147">
    <property type="term" value="P:guanine catabolic process"/>
    <property type="evidence" value="ECO:0000314"/>
    <property type="project" value="MGI"/>
</dbReference>
<dbReference type="GO" id="GO:0009114">
    <property type="term" value="P:hypoxanthine catabolic process"/>
    <property type="evidence" value="ECO:0000314"/>
    <property type="project" value="MGI"/>
</dbReference>
<dbReference type="GO" id="GO:0006204">
    <property type="term" value="P:IMP catabolic process"/>
    <property type="evidence" value="ECO:0000314"/>
    <property type="project" value="MGI"/>
</dbReference>
<dbReference type="GO" id="GO:0006148">
    <property type="term" value="P:inosine catabolic process"/>
    <property type="evidence" value="ECO:0000314"/>
    <property type="project" value="MGI"/>
</dbReference>
<dbReference type="GO" id="GO:0016226">
    <property type="term" value="P:iron-sulfur cluster assembly"/>
    <property type="evidence" value="ECO:0000314"/>
    <property type="project" value="MGI"/>
</dbReference>
<dbReference type="GO" id="GO:0007595">
    <property type="term" value="P:lactation"/>
    <property type="evidence" value="ECO:0000315"/>
    <property type="project" value="MGI"/>
</dbReference>
<dbReference type="GO" id="GO:0030856">
    <property type="term" value="P:regulation of epithelial cell differentiation"/>
    <property type="evidence" value="ECO:0000315"/>
    <property type="project" value="MGI"/>
</dbReference>
<dbReference type="GO" id="GO:0009115">
    <property type="term" value="P:xanthine catabolic process"/>
    <property type="evidence" value="ECO:0000314"/>
    <property type="project" value="MGI"/>
</dbReference>
<dbReference type="FunFam" id="3.10.20.30:FF:000015">
    <property type="entry name" value="Aldehyde oxidase 1"/>
    <property type="match status" value="1"/>
</dbReference>
<dbReference type="FunFam" id="3.30.365.10:FF:000003">
    <property type="entry name" value="Aldehyde oxidase 1"/>
    <property type="match status" value="1"/>
</dbReference>
<dbReference type="FunFam" id="3.30.365.10:FF:000001">
    <property type="entry name" value="Xanthine dehydrogenase oxidase"/>
    <property type="match status" value="1"/>
</dbReference>
<dbReference type="FunFam" id="3.30.365.10:FF:000002">
    <property type="entry name" value="Xanthine dehydrogenase oxidase"/>
    <property type="match status" value="1"/>
</dbReference>
<dbReference type="FunFam" id="3.30.365.10:FF:000004">
    <property type="entry name" value="Xanthine dehydrogenase oxidase"/>
    <property type="match status" value="1"/>
</dbReference>
<dbReference type="FunFam" id="3.30.390.50:FF:000001">
    <property type="entry name" value="Xanthine dehydrogenase oxidase"/>
    <property type="match status" value="1"/>
</dbReference>
<dbReference type="FunFam" id="3.30.43.10:FF:000001">
    <property type="entry name" value="Xanthine dehydrogenase/oxidase"/>
    <property type="match status" value="1"/>
</dbReference>
<dbReference type="FunFam" id="3.30.465.10:FF:000004">
    <property type="entry name" value="Xanthine dehydrogenase/oxidase"/>
    <property type="match status" value="1"/>
</dbReference>
<dbReference type="FunFam" id="3.90.1170.50:FF:000002">
    <property type="entry name" value="Xanthine dehydrogenase/oxidase"/>
    <property type="match status" value="1"/>
</dbReference>
<dbReference type="FunFam" id="1.10.150.120:FF:000002">
    <property type="entry name" value="xanthine dehydrogenase/oxidase"/>
    <property type="match status" value="1"/>
</dbReference>
<dbReference type="FunFam" id="3.30.365.10:FF:000006">
    <property type="entry name" value="xanthine dehydrogenase/oxidase"/>
    <property type="match status" value="1"/>
</dbReference>
<dbReference type="Gene3D" id="3.10.20.30">
    <property type="match status" value="1"/>
</dbReference>
<dbReference type="Gene3D" id="3.30.465.10">
    <property type="match status" value="1"/>
</dbReference>
<dbReference type="Gene3D" id="1.10.150.120">
    <property type="entry name" value="[2Fe-2S]-binding domain"/>
    <property type="match status" value="1"/>
</dbReference>
<dbReference type="Gene3D" id="3.90.1170.50">
    <property type="entry name" value="Aldehyde oxidase/xanthine dehydrogenase, a/b hammerhead"/>
    <property type="match status" value="1"/>
</dbReference>
<dbReference type="Gene3D" id="3.30.365.10">
    <property type="entry name" value="Aldehyde oxidase/xanthine dehydrogenase, molybdopterin binding domain"/>
    <property type="match status" value="5"/>
</dbReference>
<dbReference type="Gene3D" id="3.30.390.50">
    <property type="entry name" value="CO dehydrogenase flavoprotein, C-terminal domain"/>
    <property type="match status" value="1"/>
</dbReference>
<dbReference type="Gene3D" id="3.30.43.10">
    <property type="entry name" value="Uridine Diphospho-n-acetylenolpyruvylglucosamine Reductase, domain 2"/>
    <property type="match status" value="1"/>
</dbReference>
<dbReference type="InterPro" id="IPR002888">
    <property type="entry name" value="2Fe-2S-bd"/>
</dbReference>
<dbReference type="InterPro" id="IPR036884">
    <property type="entry name" value="2Fe-2S-bd_dom_sf"/>
</dbReference>
<dbReference type="InterPro" id="IPR036010">
    <property type="entry name" value="2Fe-2S_ferredoxin-like_sf"/>
</dbReference>
<dbReference type="InterPro" id="IPR001041">
    <property type="entry name" value="2Fe-2S_ferredoxin-type"/>
</dbReference>
<dbReference type="InterPro" id="IPR006058">
    <property type="entry name" value="2Fe2S_fd_BS"/>
</dbReference>
<dbReference type="InterPro" id="IPR000674">
    <property type="entry name" value="Ald_Oxase/Xan_DH_a/b"/>
</dbReference>
<dbReference type="InterPro" id="IPR036856">
    <property type="entry name" value="Ald_Oxase/Xan_DH_a/b_sf"/>
</dbReference>
<dbReference type="InterPro" id="IPR016208">
    <property type="entry name" value="Ald_Oxase/xanthine_DH-like"/>
</dbReference>
<dbReference type="InterPro" id="IPR008274">
    <property type="entry name" value="AldOxase/xan_DH_MoCoBD1"/>
</dbReference>
<dbReference type="InterPro" id="IPR046867">
    <property type="entry name" value="AldOxase/xan_DH_MoCoBD2"/>
</dbReference>
<dbReference type="InterPro" id="IPR037165">
    <property type="entry name" value="AldOxase/xan_DH_Mopterin-bd_sf"/>
</dbReference>
<dbReference type="InterPro" id="IPR012675">
    <property type="entry name" value="Beta-grasp_dom_sf"/>
</dbReference>
<dbReference type="InterPro" id="IPR005107">
    <property type="entry name" value="CO_DH_flav_C"/>
</dbReference>
<dbReference type="InterPro" id="IPR036683">
    <property type="entry name" value="CO_DH_flav_C_dom_sf"/>
</dbReference>
<dbReference type="InterPro" id="IPR016166">
    <property type="entry name" value="FAD-bd_PCMH"/>
</dbReference>
<dbReference type="InterPro" id="IPR036318">
    <property type="entry name" value="FAD-bd_PCMH-like_sf"/>
</dbReference>
<dbReference type="InterPro" id="IPR016167">
    <property type="entry name" value="FAD-bd_PCMH_sub1"/>
</dbReference>
<dbReference type="InterPro" id="IPR016169">
    <property type="entry name" value="FAD-bd_PCMH_sub2"/>
</dbReference>
<dbReference type="InterPro" id="IPR002346">
    <property type="entry name" value="Mopterin_DH_FAD-bd"/>
</dbReference>
<dbReference type="InterPro" id="IPR022407">
    <property type="entry name" value="OxRdtase_Mopterin_BS"/>
</dbReference>
<dbReference type="InterPro" id="IPR014309">
    <property type="entry name" value="Xanthine_DH_Mopterin-bd_su"/>
</dbReference>
<dbReference type="InterPro" id="IPR014307">
    <property type="entry name" value="Xanthine_DH_ssu"/>
</dbReference>
<dbReference type="NCBIfam" id="TIGR02963">
    <property type="entry name" value="xanthine_xdhA"/>
    <property type="match status" value="1"/>
</dbReference>
<dbReference type="NCBIfam" id="TIGR02965">
    <property type="entry name" value="xanthine_xdhB"/>
    <property type="match status" value="1"/>
</dbReference>
<dbReference type="PANTHER" id="PTHR45444">
    <property type="entry name" value="XANTHINE DEHYDROGENASE"/>
    <property type="match status" value="1"/>
</dbReference>
<dbReference type="PANTHER" id="PTHR45444:SF3">
    <property type="entry name" value="XANTHINE DEHYDROGENASE"/>
    <property type="match status" value="1"/>
</dbReference>
<dbReference type="Pfam" id="PF01315">
    <property type="entry name" value="Ald_Xan_dh_C"/>
    <property type="match status" value="1"/>
</dbReference>
<dbReference type="Pfam" id="PF03450">
    <property type="entry name" value="CO_deh_flav_C"/>
    <property type="match status" value="1"/>
</dbReference>
<dbReference type="Pfam" id="PF00941">
    <property type="entry name" value="FAD_binding_5"/>
    <property type="match status" value="1"/>
</dbReference>
<dbReference type="Pfam" id="PF00111">
    <property type="entry name" value="Fer2"/>
    <property type="match status" value="1"/>
</dbReference>
<dbReference type="Pfam" id="PF01799">
    <property type="entry name" value="Fer2_2"/>
    <property type="match status" value="1"/>
</dbReference>
<dbReference type="Pfam" id="PF02738">
    <property type="entry name" value="MoCoBD_1"/>
    <property type="match status" value="1"/>
</dbReference>
<dbReference type="Pfam" id="PF20256">
    <property type="entry name" value="MoCoBD_2"/>
    <property type="match status" value="1"/>
</dbReference>
<dbReference type="PIRSF" id="PIRSF000127">
    <property type="entry name" value="Xanthine_DH"/>
    <property type="match status" value="1"/>
</dbReference>
<dbReference type="SMART" id="SM01008">
    <property type="entry name" value="Ald_Xan_dh_C"/>
    <property type="match status" value="1"/>
</dbReference>
<dbReference type="SMART" id="SM01092">
    <property type="entry name" value="CO_deh_flav_C"/>
    <property type="match status" value="1"/>
</dbReference>
<dbReference type="SUPFAM" id="SSF54292">
    <property type="entry name" value="2Fe-2S ferredoxin-like"/>
    <property type="match status" value="1"/>
</dbReference>
<dbReference type="SUPFAM" id="SSF55447">
    <property type="entry name" value="CO dehydrogenase flavoprotein C-terminal domain-like"/>
    <property type="match status" value="1"/>
</dbReference>
<dbReference type="SUPFAM" id="SSF47741">
    <property type="entry name" value="CO dehydrogenase ISP C-domain like"/>
    <property type="match status" value="1"/>
</dbReference>
<dbReference type="SUPFAM" id="SSF54665">
    <property type="entry name" value="CO dehydrogenase molybdoprotein N-domain-like"/>
    <property type="match status" value="1"/>
</dbReference>
<dbReference type="SUPFAM" id="SSF56176">
    <property type="entry name" value="FAD-binding/transporter-associated domain-like"/>
    <property type="match status" value="1"/>
</dbReference>
<dbReference type="SUPFAM" id="SSF56003">
    <property type="entry name" value="Molybdenum cofactor-binding domain"/>
    <property type="match status" value="1"/>
</dbReference>
<dbReference type="PROSITE" id="PS00197">
    <property type="entry name" value="2FE2S_FER_1"/>
    <property type="match status" value="1"/>
</dbReference>
<dbReference type="PROSITE" id="PS51085">
    <property type="entry name" value="2FE2S_FER_2"/>
    <property type="match status" value="1"/>
</dbReference>
<dbReference type="PROSITE" id="PS51387">
    <property type="entry name" value="FAD_PCMH"/>
    <property type="match status" value="1"/>
</dbReference>
<dbReference type="PROSITE" id="PS00559">
    <property type="entry name" value="MOLYBDOPTERIN_EUK"/>
    <property type="match status" value="1"/>
</dbReference>
<protein>
    <recommendedName>
        <fullName>Xanthine dehydrogenase/oxidase</fullName>
    </recommendedName>
    <domain>
        <recommendedName>
            <fullName>Xanthine dehydrogenase</fullName>
            <shortName>XD</shortName>
            <ecNumber evidence="2">1.17.1.4</ecNumber>
        </recommendedName>
    </domain>
    <domain>
        <recommendedName>
            <fullName>Xanthine oxidase</fullName>
            <shortName>XO</shortName>
            <ecNumber evidence="2">1.17.3.2</ecNumber>
        </recommendedName>
        <alternativeName>
            <fullName>Xanthine oxidoreductase</fullName>
            <shortName>XOR</shortName>
        </alternativeName>
    </domain>
</protein>
<organism>
    <name type="scientific">Mus musculus</name>
    <name type="common">Mouse</name>
    <dbReference type="NCBI Taxonomy" id="10090"/>
    <lineage>
        <taxon>Eukaryota</taxon>
        <taxon>Metazoa</taxon>
        <taxon>Chordata</taxon>
        <taxon>Craniata</taxon>
        <taxon>Vertebrata</taxon>
        <taxon>Euteleostomi</taxon>
        <taxon>Mammalia</taxon>
        <taxon>Eutheria</taxon>
        <taxon>Euarchontoglires</taxon>
        <taxon>Glires</taxon>
        <taxon>Rodentia</taxon>
        <taxon>Myomorpha</taxon>
        <taxon>Muroidea</taxon>
        <taxon>Muridae</taxon>
        <taxon>Murinae</taxon>
        <taxon>Mus</taxon>
        <taxon>Mus</taxon>
    </lineage>
</organism>
<feature type="initiator methionine" description="Removed" evidence="5">
    <location>
        <position position="1"/>
    </location>
</feature>
<feature type="chain" id="PRO_0000166085" description="Xanthine dehydrogenase/oxidase">
    <location>
        <begin position="2"/>
        <end position="1335"/>
    </location>
</feature>
<feature type="domain" description="2Fe-2S ferredoxin-type" evidence="3">
    <location>
        <begin position="7"/>
        <end position="94"/>
    </location>
</feature>
<feature type="domain" description="FAD-binding PCMH-type" evidence="4">
    <location>
        <begin position="231"/>
        <end position="416"/>
    </location>
</feature>
<feature type="active site" description="Proton acceptor" evidence="1">
    <location>
        <position position="1264"/>
    </location>
</feature>
<feature type="binding site" evidence="2">
    <location>
        <position position="46"/>
    </location>
    <ligand>
        <name>[2Fe-2S] cluster</name>
        <dbReference type="ChEBI" id="CHEBI:190135"/>
        <label>1</label>
    </ligand>
</feature>
<feature type="binding site" evidence="2">
    <location>
        <position position="51"/>
    </location>
    <ligand>
        <name>[2Fe-2S] cluster</name>
        <dbReference type="ChEBI" id="CHEBI:190135"/>
        <label>1</label>
    </ligand>
</feature>
<feature type="binding site" evidence="2">
    <location>
        <position position="54"/>
    </location>
    <ligand>
        <name>[2Fe-2S] cluster</name>
        <dbReference type="ChEBI" id="CHEBI:190135"/>
        <label>1</label>
    </ligand>
</feature>
<feature type="binding site" evidence="2">
    <location>
        <position position="76"/>
    </location>
    <ligand>
        <name>[2Fe-2S] cluster</name>
        <dbReference type="ChEBI" id="CHEBI:190135"/>
        <label>1</label>
    </ligand>
</feature>
<feature type="binding site" evidence="2">
    <location>
        <position position="115"/>
    </location>
    <ligand>
        <name>[2Fe-2S] cluster</name>
        <dbReference type="ChEBI" id="CHEBI:190135"/>
        <label>2</label>
    </ligand>
</feature>
<feature type="binding site" evidence="2">
    <location>
        <position position="118"/>
    </location>
    <ligand>
        <name>[2Fe-2S] cluster</name>
        <dbReference type="ChEBI" id="CHEBI:190135"/>
        <label>2</label>
    </ligand>
</feature>
<feature type="binding site" evidence="2">
    <location>
        <position position="150"/>
    </location>
    <ligand>
        <name>[2Fe-2S] cluster</name>
        <dbReference type="ChEBI" id="CHEBI:190135"/>
        <label>2</label>
    </ligand>
</feature>
<feature type="binding site" evidence="2">
    <location>
        <position position="152"/>
    </location>
    <ligand>
        <name>[2Fe-2S] cluster</name>
        <dbReference type="ChEBI" id="CHEBI:190135"/>
        <label>2</label>
    </ligand>
</feature>
<feature type="binding site" evidence="1">
    <location>
        <begin position="259"/>
        <end position="266"/>
    </location>
    <ligand>
        <name>FAD</name>
        <dbReference type="ChEBI" id="CHEBI:57692"/>
    </ligand>
</feature>
<feature type="binding site" evidence="1">
    <location>
        <position position="339"/>
    </location>
    <ligand>
        <name>FAD</name>
        <dbReference type="ChEBI" id="CHEBI:57692"/>
    </ligand>
</feature>
<feature type="binding site" evidence="1">
    <location>
        <begin position="349"/>
        <end position="353"/>
    </location>
    <ligand>
        <name>FAD</name>
        <dbReference type="ChEBI" id="CHEBI:57692"/>
    </ligand>
</feature>
<feature type="binding site" evidence="1">
    <location>
        <position position="362"/>
    </location>
    <ligand>
        <name>FAD</name>
        <dbReference type="ChEBI" id="CHEBI:57692"/>
    </ligand>
</feature>
<feature type="binding site" evidence="1">
    <location>
        <position position="406"/>
    </location>
    <ligand>
        <name>FAD</name>
        <dbReference type="ChEBI" id="CHEBI:57692"/>
    </ligand>
</feature>
<feature type="binding site" evidence="1">
    <location>
        <position position="424"/>
    </location>
    <ligand>
        <name>FAD</name>
        <dbReference type="ChEBI" id="CHEBI:57692"/>
    </ligand>
</feature>
<feature type="binding site" evidence="1">
    <location>
        <position position="770"/>
    </location>
    <ligand>
        <name>Mo-molybdopterin</name>
        <dbReference type="ChEBI" id="CHEBI:71302"/>
    </ligand>
    <ligandPart>
        <name>Mo</name>
        <dbReference type="ChEBI" id="CHEBI:28685"/>
    </ligandPart>
</feature>
<feature type="binding site" evidence="1">
    <location>
        <position position="801"/>
    </location>
    <ligand>
        <name>Mo-molybdopterin</name>
        <dbReference type="ChEBI" id="CHEBI:71302"/>
    </ligand>
    <ligandPart>
        <name>Mo</name>
        <dbReference type="ChEBI" id="CHEBI:28685"/>
    </ligandPart>
</feature>
<feature type="binding site" evidence="1">
    <location>
        <position position="805"/>
    </location>
    <ligand>
        <name>substrate</name>
    </ligand>
</feature>
<feature type="binding site" evidence="1">
    <location>
        <position position="883"/>
    </location>
    <ligand>
        <name>substrate</name>
    </ligand>
</feature>
<feature type="binding site" evidence="1">
    <location>
        <position position="915"/>
    </location>
    <ligand>
        <name>Mo-molybdopterin</name>
        <dbReference type="ChEBI" id="CHEBI:71302"/>
    </ligand>
    <ligandPart>
        <name>Mo</name>
        <dbReference type="ChEBI" id="CHEBI:28685"/>
    </ligandPart>
</feature>
<feature type="binding site" evidence="1">
    <location>
        <position position="917"/>
    </location>
    <ligand>
        <name>substrate</name>
    </ligand>
</feature>
<feature type="binding site" evidence="1">
    <location>
        <position position="1013"/>
    </location>
    <ligand>
        <name>substrate</name>
    </ligand>
</feature>
<feature type="binding site" evidence="1">
    <location>
        <position position="1082"/>
    </location>
    <ligand>
        <name>Mo-molybdopterin</name>
        <dbReference type="ChEBI" id="CHEBI:71302"/>
    </ligand>
    <ligandPart>
        <name>Mo</name>
        <dbReference type="ChEBI" id="CHEBI:28685"/>
    </ligandPart>
</feature>
<feature type="disulfide bond" description="In oxidase form" evidence="1">
    <location>
        <begin position="538"/>
        <end position="995"/>
    </location>
</feature>
<feature type="sequence conflict" description="In Ref. 2; CAA44705." evidence="6" ref="2">
    <original>V</original>
    <variation>I</variation>
    <location>
        <position position="241"/>
    </location>
</feature>
<feature type="sequence conflict" description="In Ref. 1; CAA52997." evidence="6" ref="1">
    <original>M</original>
    <variation>T</variation>
    <location>
        <position position="621"/>
    </location>
</feature>
<feature type="sequence conflict" description="In Ref. 1; CAA52997 and 2; CAA44705." evidence="6" ref="1 2">
    <original>L</original>
    <variation>V</variation>
    <location>
        <position position="1247"/>
    </location>
</feature>
<name>XDH_MOUSE</name>
<reference key="1">
    <citation type="journal article" date="1994" name="Genomics">
        <title>Chromosomal mapping, isolation, and characterization of the mouse xanthine dehydrogenase gene.</title>
        <authorList>
            <person name="Cazzaniga G."/>
            <person name="Terao M."/>
            <person name="Lo Schiavo P."/>
            <person name="Galbiati F."/>
            <person name="Segalla F."/>
            <person name="Seldin M.F."/>
            <person name="Garattini E."/>
        </authorList>
    </citation>
    <scope>NUCLEOTIDE SEQUENCE [GENOMIC DNA]</scope>
    <source>
        <strain>129/Sv</strain>
        <tissue>Spleen</tissue>
    </source>
</reference>
<reference key="2">
    <citation type="journal article" date="1992" name="Biochem. J.">
        <title>Molecular cloning of a cDNA coding for mouse liver xanthine dehydrogenase. Regulation of its transcript by interferons in vivo.</title>
        <authorList>
            <person name="Terao M."/>
            <person name="Cazzaniga G."/>
            <person name="Ghezzi P."/>
            <person name="Bianchi M."/>
            <person name="Falciani F."/>
            <person name="Perani P."/>
            <person name="Garattini E."/>
        </authorList>
    </citation>
    <scope>NUCLEOTIDE SEQUENCE [MRNA]</scope>
    <source>
        <strain>C57BL/6J</strain>
        <tissue>Liver</tissue>
    </source>
</reference>
<reference key="3">
    <citation type="journal article" date="2009" name="PLoS Biol.">
        <title>Lineage-specific biology revealed by a finished genome assembly of the mouse.</title>
        <authorList>
            <person name="Church D.M."/>
            <person name="Goodstadt L."/>
            <person name="Hillier L.W."/>
            <person name="Zody M.C."/>
            <person name="Goldstein S."/>
            <person name="She X."/>
            <person name="Bult C.J."/>
            <person name="Agarwala R."/>
            <person name="Cherry J.L."/>
            <person name="DiCuccio M."/>
            <person name="Hlavina W."/>
            <person name="Kapustin Y."/>
            <person name="Meric P."/>
            <person name="Maglott D."/>
            <person name="Birtle Z."/>
            <person name="Marques A.C."/>
            <person name="Graves T."/>
            <person name="Zhou S."/>
            <person name="Teague B."/>
            <person name="Potamousis K."/>
            <person name="Churas C."/>
            <person name="Place M."/>
            <person name="Herschleb J."/>
            <person name="Runnheim R."/>
            <person name="Forrest D."/>
            <person name="Amos-Landgraf J."/>
            <person name="Schwartz D.C."/>
            <person name="Cheng Z."/>
            <person name="Lindblad-Toh K."/>
            <person name="Eichler E.E."/>
            <person name="Ponting C.P."/>
        </authorList>
    </citation>
    <scope>NUCLEOTIDE SEQUENCE [LARGE SCALE GENOMIC DNA]</scope>
    <source>
        <strain>C57BL/6J</strain>
    </source>
</reference>
<reference key="4">
    <citation type="journal article" date="1995" name="Biochim. Biophys. Acta">
        <title>Carboxy-terminal cytoplasmic domain of mouse butyrophilin specifically associates with a 150-kDa protein of mammary epithelial cells and milk fat globule membrane.</title>
        <authorList>
            <person name="Ishii T."/>
            <person name="Aoki N."/>
            <person name="Noda A."/>
            <person name="Adachi T."/>
            <person name="Nakamura R."/>
            <person name="Matsuda T."/>
        </authorList>
    </citation>
    <scope>PROTEIN SEQUENCE OF 2-9</scope>
    <scope>INTERACTION WITH BTN1A1</scope>
</reference>
<reference key="5">
    <citation type="journal article" date="2010" name="Cell">
        <title>A tissue-specific atlas of mouse protein phosphorylation and expression.</title>
        <authorList>
            <person name="Huttlin E.L."/>
            <person name="Jedrychowski M.P."/>
            <person name="Elias J.E."/>
            <person name="Goswami T."/>
            <person name="Rad R."/>
            <person name="Beausoleil S.A."/>
            <person name="Villen J."/>
            <person name="Haas W."/>
            <person name="Sowa M.E."/>
            <person name="Gygi S.P."/>
        </authorList>
    </citation>
    <scope>IDENTIFICATION BY MASS SPECTROMETRY [LARGE SCALE ANALYSIS]</scope>
    <source>
        <tissue>Brown adipose tissue</tissue>
        <tissue>Heart</tissue>
        <tissue>Kidney</tissue>
        <tissue>Liver</tissue>
        <tissue>Lung</tissue>
        <tissue>Pancreas</tissue>
        <tissue>Spleen</tissue>
        <tissue>Testis</tissue>
    </source>
</reference>
<evidence type="ECO:0000250" key="1"/>
<evidence type="ECO:0000250" key="2">
    <source>
        <dbReference type="UniProtKB" id="P22985"/>
    </source>
</evidence>
<evidence type="ECO:0000255" key="3">
    <source>
        <dbReference type="PROSITE-ProRule" id="PRU00465"/>
    </source>
</evidence>
<evidence type="ECO:0000255" key="4">
    <source>
        <dbReference type="PROSITE-ProRule" id="PRU00718"/>
    </source>
</evidence>
<evidence type="ECO:0000269" key="5">
    <source>
    </source>
</evidence>
<evidence type="ECO:0000305" key="6"/>
<sequence>MTRTTVDELVFFVNGKKVVEKNADPETTLLVYLRRKLGLCGTKLGCGEGGCGACTVMISKYDRLQNKIVHFSVNACLTPICSLHHVAVTTVEGIGNTKKLHPVQERIAKSHGSQCGFCTPGIVMSMYTLLRNKPEPTVEEIENAFQGNLCRCTGYRPILQGFRTFAKDGGCCGGSGNNPNCCMSQTKDQTIAPSSSLFNPEDFKPLDPTQEPIFPPELLRLKDTPRKTLRFEGERVTWIQVSTMEELLDLKAQHPDAKLVVGNTEIGIEMKFKNMLFPLIICPAWILELTSVAHGPEGISFGAACPLSLVESVLADAIATLPEQRTEVFRGVMEQLRWFAGKQVKSVASIGGNIITASPISDLNPVLMASRAKLTLASRGTKRTVWMDHTFFPGYRRTLLSPEEILVSIVIPYSRKGEFFSAFKQASRREDDIAKVTSGMRVLFKPGTTEVQELSLCFGGMADRTVSALKTTPKQLSKSWNEELLQDVCAGLAEELHLAPDAPGGMVEFRRTLTLSFFFKFYLTVLQKLGRADLEGMCGKLDPTFASATLLFQKDPPANVQLFQEVPKGQSEEDMVGRPMPHLAADMQASGEAVYCDDIPRYENELSLRLVTSTRAHAKIMSIDTSEAKKVPGFVCFLTSEDVPGSNITGIFNDETVFAKDEVTCVGHIIGAVVADTPEHAHRAARGVKITYEDLPAIITIQDAIKNNSFYGPEVKIEKGDLKKGFSEADNVVSGELYIGGQEHFYLETHCTIAVPKGEAGEMELFVSTQNTMKTQSFIAKMLGVPDNRIVVRVKRMGGGFGGKETRSTLISTAVALAAYKTGRPVRCMLDRDEDMLITGGRHPFLAKYKVGFMKTGTIVALEVAHFSNGGNSEDLSRSIMERAVFHMDNAYKIPNIRGTGRICKTNLPSNTAFRGFGGPQGMLIAEYWMSEVAVTCGLPAEEVRRKNMYKEGDLTHFNQKLEGFTLPRCWDECIASSQYQARKMEVEKFNRENCWKKRGLCIIPTKFGISFTLSFLNQGGALVHVYTDGSVLLTHGGTEMGQGLHTKMVQVASRALKIPTSKIHITETSTNTVPNTSPTAASASADLNGQAIYEACQTILKRLEPFKKKNPSGSWESWVMDAYTSAVSLSATGFYKTPNLGYSFETNSGNPFHYFSYGVACSEVEIDCLTGDHKNLRTDIVMDVGSSLNPAIDIGQVEGAFVQGLGLFTMEELHYSPEGSLHTRGPSTYKIPAFGSIPIEFRVSLLRDCPNKRAIYASKAVGEPPLFLASSIFFAIKDAIRAARAQHGDSNAKQLFQLDSPATPEKIRNACVDQFTTLCATGTPENCKSWSVRI</sequence>
<proteinExistence type="evidence at protein level"/>